<dbReference type="EC" id="2.7.2.1" evidence="1"/>
<dbReference type="EMBL" id="CP000511">
    <property type="protein sequence ID" value="ABM11539.1"/>
    <property type="molecule type" value="Genomic_DNA"/>
</dbReference>
<dbReference type="RefSeq" id="WP_011777976.1">
    <property type="nucleotide sequence ID" value="NC_008726.1"/>
</dbReference>
<dbReference type="SMR" id="A1T2Y9"/>
<dbReference type="STRING" id="350058.Mvan_0701"/>
<dbReference type="KEGG" id="mva:Mvan_0701"/>
<dbReference type="eggNOG" id="COG0282">
    <property type="taxonomic scope" value="Bacteria"/>
</dbReference>
<dbReference type="HOGENOM" id="CLU_020352_0_1_11"/>
<dbReference type="UniPathway" id="UPA00340">
    <property type="reaction ID" value="UER00458"/>
</dbReference>
<dbReference type="Proteomes" id="UP000009159">
    <property type="component" value="Chromosome"/>
</dbReference>
<dbReference type="GO" id="GO:0005737">
    <property type="term" value="C:cytoplasm"/>
    <property type="evidence" value="ECO:0007669"/>
    <property type="project" value="UniProtKB-SubCell"/>
</dbReference>
<dbReference type="GO" id="GO:0008776">
    <property type="term" value="F:acetate kinase activity"/>
    <property type="evidence" value="ECO:0007669"/>
    <property type="project" value="UniProtKB-UniRule"/>
</dbReference>
<dbReference type="GO" id="GO:0005524">
    <property type="term" value="F:ATP binding"/>
    <property type="evidence" value="ECO:0007669"/>
    <property type="project" value="UniProtKB-KW"/>
</dbReference>
<dbReference type="GO" id="GO:0000287">
    <property type="term" value="F:magnesium ion binding"/>
    <property type="evidence" value="ECO:0007669"/>
    <property type="project" value="UniProtKB-UniRule"/>
</dbReference>
<dbReference type="GO" id="GO:0006083">
    <property type="term" value="P:acetate metabolic process"/>
    <property type="evidence" value="ECO:0007669"/>
    <property type="project" value="TreeGrafter"/>
</dbReference>
<dbReference type="GO" id="GO:0006085">
    <property type="term" value="P:acetyl-CoA biosynthetic process"/>
    <property type="evidence" value="ECO:0007669"/>
    <property type="project" value="UniProtKB-UniRule"/>
</dbReference>
<dbReference type="CDD" id="cd24010">
    <property type="entry name" value="ASKHA_NBD_AcK_PK"/>
    <property type="match status" value="1"/>
</dbReference>
<dbReference type="Gene3D" id="3.30.420.40">
    <property type="match status" value="2"/>
</dbReference>
<dbReference type="HAMAP" id="MF_00020">
    <property type="entry name" value="Acetate_kinase"/>
    <property type="match status" value="1"/>
</dbReference>
<dbReference type="InterPro" id="IPR004372">
    <property type="entry name" value="Ac/propionate_kinase"/>
</dbReference>
<dbReference type="InterPro" id="IPR000890">
    <property type="entry name" value="Aliphatic_acid_kin_short-chain"/>
</dbReference>
<dbReference type="InterPro" id="IPR023865">
    <property type="entry name" value="Aliphatic_acid_kinase_CS"/>
</dbReference>
<dbReference type="InterPro" id="IPR043129">
    <property type="entry name" value="ATPase_NBD"/>
</dbReference>
<dbReference type="NCBIfam" id="TIGR00016">
    <property type="entry name" value="ackA"/>
    <property type="match status" value="1"/>
</dbReference>
<dbReference type="PANTHER" id="PTHR21060">
    <property type="entry name" value="ACETATE KINASE"/>
    <property type="match status" value="1"/>
</dbReference>
<dbReference type="PANTHER" id="PTHR21060:SF15">
    <property type="entry name" value="ACETATE KINASE-RELATED"/>
    <property type="match status" value="1"/>
</dbReference>
<dbReference type="Pfam" id="PF00871">
    <property type="entry name" value="Acetate_kinase"/>
    <property type="match status" value="1"/>
</dbReference>
<dbReference type="PIRSF" id="PIRSF000722">
    <property type="entry name" value="Acetate_prop_kin"/>
    <property type="match status" value="1"/>
</dbReference>
<dbReference type="PRINTS" id="PR00471">
    <property type="entry name" value="ACETATEKNASE"/>
</dbReference>
<dbReference type="SUPFAM" id="SSF53067">
    <property type="entry name" value="Actin-like ATPase domain"/>
    <property type="match status" value="2"/>
</dbReference>
<dbReference type="PROSITE" id="PS01075">
    <property type="entry name" value="ACETATE_KINASE_1"/>
    <property type="match status" value="1"/>
</dbReference>
<dbReference type="PROSITE" id="PS01076">
    <property type="entry name" value="ACETATE_KINASE_2"/>
    <property type="match status" value="1"/>
</dbReference>
<gene>
    <name evidence="1" type="primary">ackA</name>
    <name type="ordered locus">Mvan_0701</name>
</gene>
<name>ACKA_MYCVP</name>
<sequence length="389" mass="41108">MSRSVLVLNSGSSSVKYAVLEPDSGVLVADGIVERIGEEGAERAVTDHAAAMQVVFDSLASDGHRLDDLGLVAVGHRVVHGGQDLYRPTVVDDATIARLKELSPLAPLHNPPAILGIEVARKALPDLPHVAVFDTAFFHDLPPAAATYAIDAEVAGSWHIRRYGFHGTSHQYVSEQAAAFLNVPLESLSQIVLHLGNGASASAILGGRPVETSMGLTPMEGLVMGTRSGDVDPGVIFYLWRTAGMSVEDIEAMLNRRSGVRGLGGEIDFRVLHQRIESGDAAAQLAYDVYIHRLRKYVGAYLATLGSVDVITFTAGVGENDAAVRRDVLSGLTAFGIELDEHLNASPARTARRISPDGAPITVLVVPTNEELAIARACAGVLGGRLGHG</sequence>
<reference key="1">
    <citation type="submission" date="2006-12" db="EMBL/GenBank/DDBJ databases">
        <title>Complete sequence of Mycobacterium vanbaalenii PYR-1.</title>
        <authorList>
            <consortium name="US DOE Joint Genome Institute"/>
            <person name="Copeland A."/>
            <person name="Lucas S."/>
            <person name="Lapidus A."/>
            <person name="Barry K."/>
            <person name="Detter J.C."/>
            <person name="Glavina del Rio T."/>
            <person name="Hammon N."/>
            <person name="Israni S."/>
            <person name="Dalin E."/>
            <person name="Tice H."/>
            <person name="Pitluck S."/>
            <person name="Singan V."/>
            <person name="Schmutz J."/>
            <person name="Larimer F."/>
            <person name="Land M."/>
            <person name="Hauser L."/>
            <person name="Kyrpides N."/>
            <person name="Anderson I.J."/>
            <person name="Miller C."/>
            <person name="Richardson P."/>
        </authorList>
    </citation>
    <scope>NUCLEOTIDE SEQUENCE [LARGE SCALE GENOMIC DNA]</scope>
    <source>
        <strain>DSM 7251 / JCM 13017 / BCRC 16820 / KCTC 9966 / NRRL B-24157 / PYR-1</strain>
    </source>
</reference>
<comment type="function">
    <text evidence="1">Catalyzes the formation of acetyl phosphate from acetate and ATP. Can also catalyze the reverse reaction.</text>
</comment>
<comment type="catalytic activity">
    <reaction evidence="1">
        <text>acetate + ATP = acetyl phosphate + ADP</text>
        <dbReference type="Rhea" id="RHEA:11352"/>
        <dbReference type="ChEBI" id="CHEBI:22191"/>
        <dbReference type="ChEBI" id="CHEBI:30089"/>
        <dbReference type="ChEBI" id="CHEBI:30616"/>
        <dbReference type="ChEBI" id="CHEBI:456216"/>
        <dbReference type="EC" id="2.7.2.1"/>
    </reaction>
</comment>
<comment type="cofactor">
    <cofactor evidence="1">
        <name>Mg(2+)</name>
        <dbReference type="ChEBI" id="CHEBI:18420"/>
    </cofactor>
    <cofactor evidence="1">
        <name>Mn(2+)</name>
        <dbReference type="ChEBI" id="CHEBI:29035"/>
    </cofactor>
    <text evidence="1">Mg(2+). Can also accept Mn(2+).</text>
</comment>
<comment type="pathway">
    <text evidence="1">Metabolic intermediate biosynthesis; acetyl-CoA biosynthesis; acetyl-CoA from acetate: step 1/2.</text>
</comment>
<comment type="subunit">
    <text evidence="1">Homodimer.</text>
</comment>
<comment type="subcellular location">
    <subcellularLocation>
        <location evidence="1">Cytoplasm</location>
    </subcellularLocation>
</comment>
<comment type="similarity">
    <text evidence="1">Belongs to the acetokinase family.</text>
</comment>
<organism>
    <name type="scientific">Mycolicibacterium vanbaalenii (strain DSM 7251 / JCM 13017 / BCRC 16820 / KCTC 9966 / NRRL B-24157 / PYR-1)</name>
    <name type="common">Mycobacterium vanbaalenii</name>
    <dbReference type="NCBI Taxonomy" id="350058"/>
    <lineage>
        <taxon>Bacteria</taxon>
        <taxon>Bacillati</taxon>
        <taxon>Actinomycetota</taxon>
        <taxon>Actinomycetes</taxon>
        <taxon>Mycobacteriales</taxon>
        <taxon>Mycobacteriaceae</taxon>
        <taxon>Mycolicibacterium</taxon>
    </lineage>
</organism>
<proteinExistence type="inferred from homology"/>
<evidence type="ECO:0000255" key="1">
    <source>
        <dbReference type="HAMAP-Rule" id="MF_00020"/>
    </source>
</evidence>
<accession>A1T2Y9</accession>
<feature type="chain" id="PRO_1000089984" description="Acetate kinase">
    <location>
        <begin position="1"/>
        <end position="389"/>
    </location>
</feature>
<feature type="active site" description="Proton donor/acceptor" evidence="1">
    <location>
        <position position="134"/>
    </location>
</feature>
<feature type="binding site" evidence="1">
    <location>
        <position position="9"/>
    </location>
    <ligand>
        <name>Mg(2+)</name>
        <dbReference type="ChEBI" id="CHEBI:18420"/>
    </ligand>
</feature>
<feature type="binding site" evidence="1">
    <location>
        <position position="16"/>
    </location>
    <ligand>
        <name>ATP</name>
        <dbReference type="ChEBI" id="CHEBI:30616"/>
    </ligand>
</feature>
<feature type="binding site" evidence="1">
    <location>
        <position position="77"/>
    </location>
    <ligand>
        <name>substrate</name>
    </ligand>
</feature>
<feature type="binding site" evidence="1">
    <location>
        <begin position="194"/>
        <end position="198"/>
    </location>
    <ligand>
        <name>ATP</name>
        <dbReference type="ChEBI" id="CHEBI:30616"/>
    </ligand>
</feature>
<feature type="binding site" evidence="1">
    <location>
        <begin position="268"/>
        <end position="270"/>
    </location>
    <ligand>
        <name>ATP</name>
        <dbReference type="ChEBI" id="CHEBI:30616"/>
    </ligand>
</feature>
<feature type="binding site" evidence="1">
    <location>
        <begin position="316"/>
        <end position="320"/>
    </location>
    <ligand>
        <name>ATP</name>
        <dbReference type="ChEBI" id="CHEBI:30616"/>
    </ligand>
</feature>
<feature type="binding site" evidence="1">
    <location>
        <position position="370"/>
    </location>
    <ligand>
        <name>Mg(2+)</name>
        <dbReference type="ChEBI" id="CHEBI:18420"/>
    </ligand>
</feature>
<feature type="site" description="Transition state stabilizer" evidence="1">
    <location>
        <position position="166"/>
    </location>
</feature>
<feature type="site" description="Transition state stabilizer" evidence="1">
    <location>
        <position position="227"/>
    </location>
</feature>
<keyword id="KW-0067">ATP-binding</keyword>
<keyword id="KW-0963">Cytoplasm</keyword>
<keyword id="KW-0418">Kinase</keyword>
<keyword id="KW-0460">Magnesium</keyword>
<keyword id="KW-0479">Metal-binding</keyword>
<keyword id="KW-0547">Nucleotide-binding</keyword>
<keyword id="KW-0808">Transferase</keyword>
<protein>
    <recommendedName>
        <fullName evidence="1">Acetate kinase</fullName>
        <ecNumber evidence="1">2.7.2.1</ecNumber>
    </recommendedName>
    <alternativeName>
        <fullName evidence="1">Acetokinase</fullName>
    </alternativeName>
</protein>